<proteinExistence type="inferred from homology"/>
<protein>
    <recommendedName>
        <fullName evidence="1">Nucleotide-binding protein HSM_1099</fullName>
    </recommendedName>
</protein>
<dbReference type="EMBL" id="CP000947">
    <property type="protein sequence ID" value="ACA30816.1"/>
    <property type="molecule type" value="Genomic_DNA"/>
</dbReference>
<dbReference type="RefSeq" id="WP_012340283.1">
    <property type="nucleotide sequence ID" value="NC_010519.1"/>
</dbReference>
<dbReference type="SMR" id="B0UTI0"/>
<dbReference type="STRING" id="228400.HSM_1099"/>
<dbReference type="GeneID" id="31487399"/>
<dbReference type="KEGG" id="hsm:HSM_1099"/>
<dbReference type="HOGENOM" id="CLU_099839_1_0_6"/>
<dbReference type="GO" id="GO:0005829">
    <property type="term" value="C:cytosol"/>
    <property type="evidence" value="ECO:0007669"/>
    <property type="project" value="TreeGrafter"/>
</dbReference>
<dbReference type="GO" id="GO:0000166">
    <property type="term" value="F:nucleotide binding"/>
    <property type="evidence" value="ECO:0007669"/>
    <property type="project" value="TreeGrafter"/>
</dbReference>
<dbReference type="CDD" id="cd11740">
    <property type="entry name" value="YajQ_like"/>
    <property type="match status" value="1"/>
</dbReference>
<dbReference type="FunFam" id="3.30.70.860:FF:000001">
    <property type="entry name" value="UPF0234 protein YajQ"/>
    <property type="match status" value="1"/>
</dbReference>
<dbReference type="FunFam" id="3.30.70.990:FF:000001">
    <property type="entry name" value="UPF0234 protein YajQ"/>
    <property type="match status" value="1"/>
</dbReference>
<dbReference type="Gene3D" id="3.30.70.860">
    <property type="match status" value="1"/>
</dbReference>
<dbReference type="Gene3D" id="3.30.70.990">
    <property type="entry name" value="YajQ-like, domain 2"/>
    <property type="match status" value="1"/>
</dbReference>
<dbReference type="HAMAP" id="MF_00632">
    <property type="entry name" value="YajQ"/>
    <property type="match status" value="1"/>
</dbReference>
<dbReference type="InterPro" id="IPR007551">
    <property type="entry name" value="DUF520"/>
</dbReference>
<dbReference type="InterPro" id="IPR035571">
    <property type="entry name" value="UPF0234-like_C"/>
</dbReference>
<dbReference type="InterPro" id="IPR035570">
    <property type="entry name" value="UPF0234_N"/>
</dbReference>
<dbReference type="InterPro" id="IPR036183">
    <property type="entry name" value="YajQ-like_sf"/>
</dbReference>
<dbReference type="NCBIfam" id="NF003819">
    <property type="entry name" value="PRK05412.1"/>
    <property type="match status" value="1"/>
</dbReference>
<dbReference type="PANTHER" id="PTHR30476">
    <property type="entry name" value="UPF0234 PROTEIN YAJQ"/>
    <property type="match status" value="1"/>
</dbReference>
<dbReference type="PANTHER" id="PTHR30476:SF0">
    <property type="entry name" value="UPF0234 PROTEIN YAJQ"/>
    <property type="match status" value="1"/>
</dbReference>
<dbReference type="Pfam" id="PF04461">
    <property type="entry name" value="DUF520"/>
    <property type="match status" value="1"/>
</dbReference>
<dbReference type="SUPFAM" id="SSF89963">
    <property type="entry name" value="YajQ-like"/>
    <property type="match status" value="2"/>
</dbReference>
<accession>B0UTI0</accession>
<name>Y1099_HISS2</name>
<sequence length="163" mass="18583">MPSFDIVSEITLYEIRNAVENANRVLSTRYDFRGVEATIELNEKAETIKVTTESDFQLEQLIEILISSCVKRDIQHNSLDIPADSEHSGKLYSKEIKLKQGIETDMAKKIIKLIKDAKLKVQTQIQGEQVRVSGKSRDDLQATIQLVKNAELGQPFQFNNFRD</sequence>
<feature type="chain" id="PRO_1000130631" description="Nucleotide-binding protein HSM_1099">
    <location>
        <begin position="1"/>
        <end position="163"/>
    </location>
</feature>
<evidence type="ECO:0000255" key="1">
    <source>
        <dbReference type="HAMAP-Rule" id="MF_00632"/>
    </source>
</evidence>
<comment type="function">
    <text evidence="1">Nucleotide-binding protein.</text>
</comment>
<comment type="similarity">
    <text evidence="1">Belongs to the YajQ family.</text>
</comment>
<organism>
    <name type="scientific">Histophilus somni (strain 2336)</name>
    <name type="common">Haemophilus somnus</name>
    <dbReference type="NCBI Taxonomy" id="228400"/>
    <lineage>
        <taxon>Bacteria</taxon>
        <taxon>Pseudomonadati</taxon>
        <taxon>Pseudomonadota</taxon>
        <taxon>Gammaproteobacteria</taxon>
        <taxon>Pasteurellales</taxon>
        <taxon>Pasteurellaceae</taxon>
        <taxon>Histophilus</taxon>
    </lineage>
</organism>
<reference key="1">
    <citation type="submission" date="2008-02" db="EMBL/GenBank/DDBJ databases">
        <title>Complete sequence of Haemophilus somnus 2336.</title>
        <authorList>
            <consortium name="US DOE Joint Genome Institute"/>
            <person name="Siddaramappa S."/>
            <person name="Duncan A.J."/>
            <person name="Challacombe J.F."/>
            <person name="Rainey D."/>
            <person name="Gillaspy A.F."/>
            <person name="Carson M."/>
            <person name="Gipson J."/>
            <person name="Gipson M."/>
            <person name="Bruce D."/>
            <person name="Detter J.C."/>
            <person name="Han C.S."/>
            <person name="Land M."/>
            <person name="Tapia R."/>
            <person name="Thompson L.S."/>
            <person name="Orvis J."/>
            <person name="Zaitshik J."/>
            <person name="Barnes G."/>
            <person name="Brettin T.S."/>
            <person name="Dyer D.W."/>
            <person name="Inzana T.J."/>
        </authorList>
    </citation>
    <scope>NUCLEOTIDE SEQUENCE [LARGE SCALE GENOMIC DNA]</scope>
    <source>
        <strain>2336</strain>
    </source>
</reference>
<keyword id="KW-0547">Nucleotide-binding</keyword>
<gene>
    <name type="ordered locus">HSM_1099</name>
</gene>